<proteinExistence type="inferred from homology"/>
<gene>
    <name evidence="1" type="primary">tilS</name>
    <name type="ordered locus">SPA0243</name>
</gene>
<keyword id="KW-0067">ATP-binding</keyword>
<keyword id="KW-0963">Cytoplasm</keyword>
<keyword id="KW-0436">Ligase</keyword>
<keyword id="KW-0547">Nucleotide-binding</keyword>
<keyword id="KW-0819">tRNA processing</keyword>
<organism>
    <name type="scientific">Salmonella paratyphi A (strain ATCC 9150 / SARB42)</name>
    <dbReference type="NCBI Taxonomy" id="295319"/>
    <lineage>
        <taxon>Bacteria</taxon>
        <taxon>Pseudomonadati</taxon>
        <taxon>Pseudomonadota</taxon>
        <taxon>Gammaproteobacteria</taxon>
        <taxon>Enterobacterales</taxon>
        <taxon>Enterobacteriaceae</taxon>
        <taxon>Salmonella</taxon>
    </lineage>
</organism>
<dbReference type="EC" id="6.3.4.19" evidence="1"/>
<dbReference type="EMBL" id="CP000026">
    <property type="protein sequence ID" value="AAV76272.1"/>
    <property type="molecule type" value="Genomic_DNA"/>
</dbReference>
<dbReference type="RefSeq" id="WP_000210035.1">
    <property type="nucleotide sequence ID" value="NC_006511.1"/>
</dbReference>
<dbReference type="SMR" id="Q5PD76"/>
<dbReference type="KEGG" id="spt:SPA0243"/>
<dbReference type="HOGENOM" id="CLU_018869_2_0_6"/>
<dbReference type="Proteomes" id="UP000008185">
    <property type="component" value="Chromosome"/>
</dbReference>
<dbReference type="GO" id="GO:0005737">
    <property type="term" value="C:cytoplasm"/>
    <property type="evidence" value="ECO:0007669"/>
    <property type="project" value="UniProtKB-SubCell"/>
</dbReference>
<dbReference type="GO" id="GO:0005524">
    <property type="term" value="F:ATP binding"/>
    <property type="evidence" value="ECO:0007669"/>
    <property type="project" value="UniProtKB-UniRule"/>
</dbReference>
<dbReference type="GO" id="GO:0032267">
    <property type="term" value="F:tRNA(Ile)-lysidine synthase activity"/>
    <property type="evidence" value="ECO:0007669"/>
    <property type="project" value="UniProtKB-EC"/>
</dbReference>
<dbReference type="GO" id="GO:0006400">
    <property type="term" value="P:tRNA modification"/>
    <property type="evidence" value="ECO:0007669"/>
    <property type="project" value="UniProtKB-UniRule"/>
</dbReference>
<dbReference type="CDD" id="cd01992">
    <property type="entry name" value="TilS_N"/>
    <property type="match status" value="1"/>
</dbReference>
<dbReference type="FunFam" id="3.40.50.620:FF:000173">
    <property type="entry name" value="tRNA(Ile)-lysidine synthase"/>
    <property type="match status" value="1"/>
</dbReference>
<dbReference type="Gene3D" id="1.20.59.20">
    <property type="match status" value="1"/>
</dbReference>
<dbReference type="Gene3D" id="3.40.50.620">
    <property type="entry name" value="HUPs"/>
    <property type="match status" value="1"/>
</dbReference>
<dbReference type="HAMAP" id="MF_01161">
    <property type="entry name" value="tRNA_Ile_lys_synt"/>
    <property type="match status" value="1"/>
</dbReference>
<dbReference type="InterPro" id="IPR012796">
    <property type="entry name" value="Lysidine-tRNA-synth_C"/>
</dbReference>
<dbReference type="InterPro" id="IPR014729">
    <property type="entry name" value="Rossmann-like_a/b/a_fold"/>
</dbReference>
<dbReference type="InterPro" id="IPR011063">
    <property type="entry name" value="TilS/TtcA_N"/>
</dbReference>
<dbReference type="InterPro" id="IPR012094">
    <property type="entry name" value="tRNA_Ile_lys_synt"/>
</dbReference>
<dbReference type="InterPro" id="IPR012795">
    <property type="entry name" value="tRNA_Ile_lys_synt_N"/>
</dbReference>
<dbReference type="InterPro" id="IPR015262">
    <property type="entry name" value="tRNA_Ile_lys_synt_subst-bd"/>
</dbReference>
<dbReference type="NCBIfam" id="TIGR02433">
    <property type="entry name" value="lysidine_TilS_C"/>
    <property type="match status" value="1"/>
</dbReference>
<dbReference type="NCBIfam" id="TIGR02432">
    <property type="entry name" value="lysidine_TilS_N"/>
    <property type="match status" value="1"/>
</dbReference>
<dbReference type="NCBIfam" id="NF007942">
    <property type="entry name" value="PRK10660.1"/>
    <property type="match status" value="1"/>
</dbReference>
<dbReference type="PANTHER" id="PTHR43033">
    <property type="entry name" value="TRNA(ILE)-LYSIDINE SYNTHASE-RELATED"/>
    <property type="match status" value="1"/>
</dbReference>
<dbReference type="PANTHER" id="PTHR43033:SF1">
    <property type="entry name" value="TRNA(ILE)-LYSIDINE SYNTHASE-RELATED"/>
    <property type="match status" value="1"/>
</dbReference>
<dbReference type="Pfam" id="PF01171">
    <property type="entry name" value="ATP_bind_3"/>
    <property type="match status" value="1"/>
</dbReference>
<dbReference type="Pfam" id="PF09179">
    <property type="entry name" value="TilS"/>
    <property type="match status" value="1"/>
</dbReference>
<dbReference type="Pfam" id="PF11734">
    <property type="entry name" value="TilS_C"/>
    <property type="match status" value="1"/>
</dbReference>
<dbReference type="SMART" id="SM00977">
    <property type="entry name" value="TilS_C"/>
    <property type="match status" value="1"/>
</dbReference>
<dbReference type="SUPFAM" id="SSF52402">
    <property type="entry name" value="Adenine nucleotide alpha hydrolases-like"/>
    <property type="match status" value="1"/>
</dbReference>
<dbReference type="SUPFAM" id="SSF82829">
    <property type="entry name" value="MesJ substrate recognition domain-like"/>
    <property type="match status" value="1"/>
</dbReference>
<dbReference type="SUPFAM" id="SSF56037">
    <property type="entry name" value="PheT/TilS domain"/>
    <property type="match status" value="1"/>
</dbReference>
<evidence type="ECO:0000255" key="1">
    <source>
        <dbReference type="HAMAP-Rule" id="MF_01161"/>
    </source>
</evidence>
<sequence length="430" mass="48466">MTTLTLNTSLLSSCRILAAFSGGLDSTVLLHQLVLWRERHPDVTLRAIHIHHGLSPHADSWVRHCETVCERWQVPLVVERMTLADNGLGIEAHAREARYRAFAQTLLPGEVLATAQHLDDQCETFLLALKRGSGPAGLSAMGERSPFAGTLLLRPLLRETRKTLEQWAVRHGLCWIEDESNQDDAYDRNFLRLRALPLLQRRWPHFPAAVARSATLCAEQERLLDELLASDLTDCITAEGTLRLSPLMLMSDVRRAAILRRWLAMRNAPMPSRDALERIWQEVALARDDASPCLRFGDHEIRRYQSQLWWIKSVAGQHETTVVWPVWQTPLALPAGLGTVQLVPGGELRRPREEESVSIRFKAPGVLHIVGRNGGRKLKKIWQEQGIPPWRRDTTPLLFYGETLIAAAGVFVTREGAAEDKEGVSLVWHA</sequence>
<protein>
    <recommendedName>
        <fullName evidence="1">tRNA(Ile)-lysidine synthase</fullName>
        <ecNumber evidence="1">6.3.4.19</ecNumber>
    </recommendedName>
    <alternativeName>
        <fullName evidence="1">tRNA(Ile)-2-lysyl-cytidine synthase</fullName>
    </alternativeName>
    <alternativeName>
        <fullName evidence="1">tRNA(Ile)-lysidine synthetase</fullName>
    </alternativeName>
</protein>
<comment type="function">
    <text evidence="1">Ligates lysine onto the cytidine present at position 34 of the AUA codon-specific tRNA(Ile) that contains the anticodon CAU, in an ATP-dependent manner. Cytidine is converted to lysidine, thus changing the amino acid specificity of the tRNA from methionine to isoleucine.</text>
</comment>
<comment type="catalytic activity">
    <reaction evidence="1">
        <text>cytidine(34) in tRNA(Ile2) + L-lysine + ATP = lysidine(34) in tRNA(Ile2) + AMP + diphosphate + H(+)</text>
        <dbReference type="Rhea" id="RHEA:43744"/>
        <dbReference type="Rhea" id="RHEA-COMP:10625"/>
        <dbReference type="Rhea" id="RHEA-COMP:10670"/>
        <dbReference type="ChEBI" id="CHEBI:15378"/>
        <dbReference type="ChEBI" id="CHEBI:30616"/>
        <dbReference type="ChEBI" id="CHEBI:32551"/>
        <dbReference type="ChEBI" id="CHEBI:33019"/>
        <dbReference type="ChEBI" id="CHEBI:82748"/>
        <dbReference type="ChEBI" id="CHEBI:83665"/>
        <dbReference type="ChEBI" id="CHEBI:456215"/>
        <dbReference type="EC" id="6.3.4.19"/>
    </reaction>
</comment>
<comment type="subcellular location">
    <subcellularLocation>
        <location evidence="1">Cytoplasm</location>
    </subcellularLocation>
</comment>
<comment type="domain">
    <text>The N-terminal region contains the highly conserved SGGXDS motif, predicted to be a P-loop motif involved in ATP binding.</text>
</comment>
<comment type="similarity">
    <text evidence="1">Belongs to the tRNA(Ile)-lysidine synthase family.</text>
</comment>
<accession>Q5PD76</accession>
<feature type="chain" id="PRO_0000181759" description="tRNA(Ile)-lysidine synthase">
    <location>
        <begin position="1"/>
        <end position="430"/>
    </location>
</feature>
<feature type="binding site" evidence="1">
    <location>
        <begin position="21"/>
        <end position="26"/>
    </location>
    <ligand>
        <name>ATP</name>
        <dbReference type="ChEBI" id="CHEBI:30616"/>
    </ligand>
</feature>
<reference key="1">
    <citation type="journal article" date="2004" name="Nat. Genet.">
        <title>Comparison of genome degradation in Paratyphi A and Typhi, human-restricted serovars of Salmonella enterica that cause typhoid.</title>
        <authorList>
            <person name="McClelland M."/>
            <person name="Sanderson K.E."/>
            <person name="Clifton S.W."/>
            <person name="Latreille P."/>
            <person name="Porwollik S."/>
            <person name="Sabo A."/>
            <person name="Meyer R."/>
            <person name="Bieri T."/>
            <person name="Ozersky P."/>
            <person name="McLellan M."/>
            <person name="Harkins C.R."/>
            <person name="Wang C."/>
            <person name="Nguyen C."/>
            <person name="Berghoff A."/>
            <person name="Elliott G."/>
            <person name="Kohlberg S."/>
            <person name="Strong C."/>
            <person name="Du F."/>
            <person name="Carter J."/>
            <person name="Kremizki C."/>
            <person name="Layman D."/>
            <person name="Leonard S."/>
            <person name="Sun H."/>
            <person name="Fulton L."/>
            <person name="Nash W."/>
            <person name="Miner T."/>
            <person name="Minx P."/>
            <person name="Delehaunty K."/>
            <person name="Fronick C."/>
            <person name="Magrini V."/>
            <person name="Nhan M."/>
            <person name="Warren W."/>
            <person name="Florea L."/>
            <person name="Spieth J."/>
            <person name="Wilson R.K."/>
        </authorList>
    </citation>
    <scope>NUCLEOTIDE SEQUENCE [LARGE SCALE GENOMIC DNA]</scope>
    <source>
        <strain>ATCC 9150 / SARB42</strain>
    </source>
</reference>
<name>TILS_SALPA</name>